<accession>B1XB92</accession>
<keyword id="KW-0021">Allosteric enzyme</keyword>
<keyword id="KW-0067">ATP-binding</keyword>
<keyword id="KW-0319">Glycerol metabolism</keyword>
<keyword id="KW-0418">Kinase</keyword>
<keyword id="KW-0479">Metal-binding</keyword>
<keyword id="KW-0547">Nucleotide-binding</keyword>
<keyword id="KW-0808">Transferase</keyword>
<keyword id="KW-0862">Zinc</keyword>
<name>GLPK_ECODH</name>
<reference key="1">
    <citation type="journal article" date="2008" name="J. Bacteriol.">
        <title>The complete genome sequence of Escherichia coli DH10B: insights into the biology of a laboratory workhorse.</title>
        <authorList>
            <person name="Durfee T."/>
            <person name="Nelson R."/>
            <person name="Baldwin S."/>
            <person name="Plunkett G. III"/>
            <person name="Burland V."/>
            <person name="Mau B."/>
            <person name="Petrosino J.F."/>
            <person name="Qin X."/>
            <person name="Muzny D.M."/>
            <person name="Ayele M."/>
            <person name="Gibbs R.A."/>
            <person name="Csorgo B."/>
            <person name="Posfai G."/>
            <person name="Weinstock G.M."/>
            <person name="Blattner F.R."/>
        </authorList>
    </citation>
    <scope>NUCLEOTIDE SEQUENCE [LARGE SCALE GENOMIC DNA]</scope>
    <source>
        <strain>K12 / DH10B</strain>
    </source>
</reference>
<organism>
    <name type="scientific">Escherichia coli (strain K12 / DH10B)</name>
    <dbReference type="NCBI Taxonomy" id="316385"/>
    <lineage>
        <taxon>Bacteria</taxon>
        <taxon>Pseudomonadati</taxon>
        <taxon>Pseudomonadota</taxon>
        <taxon>Gammaproteobacteria</taxon>
        <taxon>Enterobacterales</taxon>
        <taxon>Enterobacteriaceae</taxon>
        <taxon>Escherichia</taxon>
    </lineage>
</organism>
<protein>
    <recommendedName>
        <fullName evidence="1">Glycerol kinase</fullName>
        <ecNumber evidence="1">2.7.1.30</ecNumber>
    </recommendedName>
    <alternativeName>
        <fullName evidence="1">ATP:glycerol 3-phosphotransferase</fullName>
    </alternativeName>
    <alternativeName>
        <fullName evidence="1">Glycerokinase</fullName>
        <shortName evidence="1">GK</shortName>
    </alternativeName>
</protein>
<dbReference type="EC" id="2.7.1.30" evidence="1"/>
<dbReference type="EMBL" id="CP000948">
    <property type="protein sequence ID" value="ACB04938.1"/>
    <property type="molecule type" value="Genomic_DNA"/>
</dbReference>
<dbReference type="RefSeq" id="WP_000136788.1">
    <property type="nucleotide sequence ID" value="NC_010473.1"/>
</dbReference>
<dbReference type="SMR" id="B1XB92"/>
<dbReference type="GeneID" id="75169366"/>
<dbReference type="KEGG" id="ecd:ECDH10B_4115"/>
<dbReference type="HOGENOM" id="CLU_009281_2_3_6"/>
<dbReference type="UniPathway" id="UPA00618">
    <property type="reaction ID" value="UER00672"/>
</dbReference>
<dbReference type="GO" id="GO:0005829">
    <property type="term" value="C:cytosol"/>
    <property type="evidence" value="ECO:0007669"/>
    <property type="project" value="TreeGrafter"/>
</dbReference>
<dbReference type="GO" id="GO:0005524">
    <property type="term" value="F:ATP binding"/>
    <property type="evidence" value="ECO:0007669"/>
    <property type="project" value="UniProtKB-UniRule"/>
</dbReference>
<dbReference type="GO" id="GO:0004370">
    <property type="term" value="F:glycerol kinase activity"/>
    <property type="evidence" value="ECO:0000250"/>
    <property type="project" value="UniProtKB"/>
</dbReference>
<dbReference type="GO" id="GO:0046872">
    <property type="term" value="F:metal ion binding"/>
    <property type="evidence" value="ECO:0007669"/>
    <property type="project" value="UniProtKB-KW"/>
</dbReference>
<dbReference type="GO" id="GO:0019563">
    <property type="term" value="P:glycerol catabolic process"/>
    <property type="evidence" value="ECO:0007669"/>
    <property type="project" value="UniProtKB-UniRule"/>
</dbReference>
<dbReference type="GO" id="GO:0006071">
    <property type="term" value="P:glycerol metabolic process"/>
    <property type="evidence" value="ECO:0000250"/>
    <property type="project" value="UniProtKB"/>
</dbReference>
<dbReference type="GO" id="GO:0006072">
    <property type="term" value="P:glycerol-3-phosphate metabolic process"/>
    <property type="evidence" value="ECO:0007669"/>
    <property type="project" value="InterPro"/>
</dbReference>
<dbReference type="CDD" id="cd07786">
    <property type="entry name" value="FGGY_EcGK_like"/>
    <property type="match status" value="1"/>
</dbReference>
<dbReference type="FunFam" id="3.30.420.40:FF:000007">
    <property type="entry name" value="Glycerol kinase"/>
    <property type="match status" value="1"/>
</dbReference>
<dbReference type="FunFam" id="3.30.420.40:FF:000008">
    <property type="entry name" value="Glycerol kinase"/>
    <property type="match status" value="1"/>
</dbReference>
<dbReference type="Gene3D" id="3.30.420.40">
    <property type="match status" value="2"/>
</dbReference>
<dbReference type="HAMAP" id="MF_00186">
    <property type="entry name" value="Glycerol_kin"/>
    <property type="match status" value="1"/>
</dbReference>
<dbReference type="InterPro" id="IPR043129">
    <property type="entry name" value="ATPase_NBD"/>
</dbReference>
<dbReference type="InterPro" id="IPR000577">
    <property type="entry name" value="Carb_kinase_FGGY"/>
</dbReference>
<dbReference type="InterPro" id="IPR018483">
    <property type="entry name" value="Carb_kinase_FGGY_CS"/>
</dbReference>
<dbReference type="InterPro" id="IPR018485">
    <property type="entry name" value="FGGY_C"/>
</dbReference>
<dbReference type="InterPro" id="IPR018484">
    <property type="entry name" value="FGGY_N"/>
</dbReference>
<dbReference type="InterPro" id="IPR005999">
    <property type="entry name" value="Glycerol_kin"/>
</dbReference>
<dbReference type="NCBIfam" id="TIGR01311">
    <property type="entry name" value="glycerol_kin"/>
    <property type="match status" value="1"/>
</dbReference>
<dbReference type="NCBIfam" id="NF000756">
    <property type="entry name" value="PRK00047.1"/>
    <property type="match status" value="1"/>
</dbReference>
<dbReference type="PANTHER" id="PTHR10196:SF69">
    <property type="entry name" value="GLYCEROL KINASE"/>
    <property type="match status" value="1"/>
</dbReference>
<dbReference type="PANTHER" id="PTHR10196">
    <property type="entry name" value="SUGAR KINASE"/>
    <property type="match status" value="1"/>
</dbReference>
<dbReference type="Pfam" id="PF02782">
    <property type="entry name" value="FGGY_C"/>
    <property type="match status" value="1"/>
</dbReference>
<dbReference type="Pfam" id="PF00370">
    <property type="entry name" value="FGGY_N"/>
    <property type="match status" value="1"/>
</dbReference>
<dbReference type="PIRSF" id="PIRSF000538">
    <property type="entry name" value="GlpK"/>
    <property type="match status" value="1"/>
</dbReference>
<dbReference type="SUPFAM" id="SSF53067">
    <property type="entry name" value="Actin-like ATPase domain"/>
    <property type="match status" value="2"/>
</dbReference>
<dbReference type="PROSITE" id="PS00933">
    <property type="entry name" value="FGGY_KINASES_1"/>
    <property type="match status" value="1"/>
</dbReference>
<dbReference type="PROSITE" id="PS00445">
    <property type="entry name" value="FGGY_KINASES_2"/>
    <property type="match status" value="1"/>
</dbReference>
<comment type="function">
    <text evidence="1">Key enzyme in the regulation of glycerol uptake and metabolism. Catalyzes the phosphorylation of glycerol to yield sn-glycerol 3-phosphate.</text>
</comment>
<comment type="catalytic activity">
    <reaction evidence="1">
        <text>glycerol + ATP = sn-glycerol 3-phosphate + ADP + H(+)</text>
        <dbReference type="Rhea" id="RHEA:21644"/>
        <dbReference type="ChEBI" id="CHEBI:15378"/>
        <dbReference type="ChEBI" id="CHEBI:17754"/>
        <dbReference type="ChEBI" id="CHEBI:30616"/>
        <dbReference type="ChEBI" id="CHEBI:57597"/>
        <dbReference type="ChEBI" id="CHEBI:456216"/>
        <dbReference type="EC" id="2.7.1.30"/>
    </reaction>
</comment>
<comment type="activity regulation">
    <text evidence="1">Activity of this regulatory enzyme is affected by several metabolites. Allosterically and non-competitively inhibited by fructose 1,6-bisphosphate (FBP) and unphosphorylated phosphocarrier protein EIIA-Glc (III-Glc), an integral component of the bacterial phosphotransferase (PTS) system.</text>
</comment>
<comment type="pathway">
    <text evidence="1">Polyol metabolism; glycerol degradation via glycerol kinase pathway; sn-glycerol 3-phosphate from glycerol: step 1/1.</text>
</comment>
<comment type="subunit">
    <text evidence="1">Homotetramer and homodimer (in equilibrium). Heterodimer with EIIA-Glc. Binds 1 zinc ion per glycerol kinase EIIA-Glc dimer. The zinc ion is important for dimerization.</text>
</comment>
<comment type="similarity">
    <text evidence="1">Belongs to the FGGY kinase family.</text>
</comment>
<gene>
    <name evidence="1" type="primary">glpK</name>
    <name type="ordered locus">ECDH10B_4115</name>
</gene>
<evidence type="ECO:0000255" key="1">
    <source>
        <dbReference type="HAMAP-Rule" id="MF_00186"/>
    </source>
</evidence>
<proteinExistence type="inferred from homology"/>
<sequence>MTEKKYIVALDQGTTSSRAVVMDHDANIISVSQREFEQIYPKPGWVEHDPMEIWATQSSTLVEVLAKADISSDQIAAIGITNQRETTIVWEKETGKPIYNAIVWQCRRTAEICEHLKRDGLEDYIRSNTGLVIDPYFSGTKVKWILDHVEGSRERARRGELLFGTVDTWLIWKMTQGRVHVTDYTNASRTMLFNIHTLDWDDKMLEVLDIPREMLPEVRRSSEVYGQTNIGGKGGTRIPISGIAGDQQAALFGQLCVKEGMAKNTYGTGCFMLMNTGEKAVKSENGLLTTIACGPTGEVNYALEGAVFMAGASIQWLRDEMKLINDAYDSEYFATKVQNTNGVYVVPAFTGLGAPYWDPYARGAIFGLTRGVNANHIIRATLESIAYQTRDVLEAMQADSGIRLHALRVDGGAVANNFLMQFQSDILGTRVERPEVREVTALGAAYLAGLAVGFWQNLDELQEKAVIEREFRPGIETTERNYRYAGWKKAVKRAMAWEEHDE</sequence>
<feature type="chain" id="PRO_1000098730" description="Glycerol kinase">
    <location>
        <begin position="1"/>
        <end position="502"/>
    </location>
</feature>
<feature type="binding site" evidence="1">
    <location>
        <position position="14"/>
    </location>
    <ligand>
        <name>ADP</name>
        <dbReference type="ChEBI" id="CHEBI:456216"/>
    </ligand>
</feature>
<feature type="binding site" evidence="1">
    <location>
        <position position="14"/>
    </location>
    <ligand>
        <name>ATP</name>
        <dbReference type="ChEBI" id="CHEBI:30616"/>
    </ligand>
</feature>
<feature type="binding site" evidence="1">
    <location>
        <position position="14"/>
    </location>
    <ligand>
        <name>sn-glycerol 3-phosphate</name>
        <dbReference type="ChEBI" id="CHEBI:57597"/>
    </ligand>
</feature>
<feature type="binding site" evidence="1">
    <location>
        <position position="15"/>
    </location>
    <ligand>
        <name>ATP</name>
        <dbReference type="ChEBI" id="CHEBI:30616"/>
    </ligand>
</feature>
<feature type="binding site" evidence="1">
    <location>
        <position position="16"/>
    </location>
    <ligand>
        <name>ATP</name>
        <dbReference type="ChEBI" id="CHEBI:30616"/>
    </ligand>
</feature>
<feature type="binding site" evidence="1">
    <location>
        <position position="18"/>
    </location>
    <ligand>
        <name>ADP</name>
        <dbReference type="ChEBI" id="CHEBI:456216"/>
    </ligand>
</feature>
<feature type="binding site" evidence="1">
    <location>
        <position position="84"/>
    </location>
    <ligand>
        <name>glycerol</name>
        <dbReference type="ChEBI" id="CHEBI:17754"/>
    </ligand>
</feature>
<feature type="binding site" evidence="1">
    <location>
        <position position="84"/>
    </location>
    <ligand>
        <name>sn-glycerol 3-phosphate</name>
        <dbReference type="ChEBI" id="CHEBI:57597"/>
    </ligand>
</feature>
<feature type="binding site" evidence="1">
    <location>
        <position position="85"/>
    </location>
    <ligand>
        <name>glycerol</name>
        <dbReference type="ChEBI" id="CHEBI:17754"/>
    </ligand>
</feature>
<feature type="binding site" evidence="1">
    <location>
        <position position="85"/>
    </location>
    <ligand>
        <name>sn-glycerol 3-phosphate</name>
        <dbReference type="ChEBI" id="CHEBI:57597"/>
    </ligand>
</feature>
<feature type="binding site" evidence="1">
    <location>
        <position position="136"/>
    </location>
    <ligand>
        <name>glycerol</name>
        <dbReference type="ChEBI" id="CHEBI:17754"/>
    </ligand>
</feature>
<feature type="binding site" evidence="1">
    <location>
        <position position="136"/>
    </location>
    <ligand>
        <name>sn-glycerol 3-phosphate</name>
        <dbReference type="ChEBI" id="CHEBI:57597"/>
    </ligand>
</feature>
<feature type="binding site" evidence="1">
    <location>
        <position position="246"/>
    </location>
    <ligand>
        <name>glycerol</name>
        <dbReference type="ChEBI" id="CHEBI:17754"/>
    </ligand>
</feature>
<feature type="binding site" evidence="1">
    <location>
        <position position="246"/>
    </location>
    <ligand>
        <name>sn-glycerol 3-phosphate</name>
        <dbReference type="ChEBI" id="CHEBI:57597"/>
    </ligand>
</feature>
<feature type="binding site" evidence="1">
    <location>
        <position position="247"/>
    </location>
    <ligand>
        <name>glycerol</name>
        <dbReference type="ChEBI" id="CHEBI:17754"/>
    </ligand>
</feature>
<feature type="binding site" evidence="1">
    <location>
        <position position="268"/>
    </location>
    <ligand>
        <name>ADP</name>
        <dbReference type="ChEBI" id="CHEBI:456216"/>
    </ligand>
</feature>
<feature type="binding site" evidence="1">
    <location>
        <position position="268"/>
    </location>
    <ligand>
        <name>ATP</name>
        <dbReference type="ChEBI" id="CHEBI:30616"/>
    </ligand>
</feature>
<feature type="binding site" evidence="1">
    <location>
        <position position="311"/>
    </location>
    <ligand>
        <name>ADP</name>
        <dbReference type="ChEBI" id="CHEBI:456216"/>
    </ligand>
</feature>
<feature type="binding site" evidence="1">
    <location>
        <position position="311"/>
    </location>
    <ligand>
        <name>ATP</name>
        <dbReference type="ChEBI" id="CHEBI:30616"/>
    </ligand>
</feature>
<feature type="binding site" evidence="1">
    <location>
        <position position="315"/>
    </location>
    <ligand>
        <name>ATP</name>
        <dbReference type="ChEBI" id="CHEBI:30616"/>
    </ligand>
</feature>
<feature type="binding site" evidence="1">
    <location>
        <position position="412"/>
    </location>
    <ligand>
        <name>ADP</name>
        <dbReference type="ChEBI" id="CHEBI:456216"/>
    </ligand>
</feature>
<feature type="binding site" evidence="1">
    <location>
        <position position="412"/>
    </location>
    <ligand>
        <name>ATP</name>
        <dbReference type="ChEBI" id="CHEBI:30616"/>
    </ligand>
</feature>
<feature type="binding site" evidence="1">
    <location>
        <position position="416"/>
    </location>
    <ligand>
        <name>ADP</name>
        <dbReference type="ChEBI" id="CHEBI:456216"/>
    </ligand>
</feature>